<proteinExistence type="inferred from homology"/>
<accession>C6DIR5</accession>
<evidence type="ECO:0000255" key="1">
    <source>
        <dbReference type="HAMAP-Rule" id="MF_01157"/>
    </source>
</evidence>
<reference key="1">
    <citation type="submission" date="2009-07" db="EMBL/GenBank/DDBJ databases">
        <title>Complete sequence of Pectobacterium carotovorum subsp. carotovorum PC1.</title>
        <authorList>
            <consortium name="US DOE Joint Genome Institute"/>
            <person name="Lucas S."/>
            <person name="Copeland A."/>
            <person name="Lapidus A."/>
            <person name="Glavina del Rio T."/>
            <person name="Tice H."/>
            <person name="Bruce D."/>
            <person name="Goodwin L."/>
            <person name="Pitluck S."/>
            <person name="Munk A.C."/>
            <person name="Brettin T."/>
            <person name="Detter J.C."/>
            <person name="Han C."/>
            <person name="Tapia R."/>
            <person name="Larimer F."/>
            <person name="Land M."/>
            <person name="Hauser L."/>
            <person name="Kyrpides N."/>
            <person name="Mikhailova N."/>
            <person name="Balakrishnan V."/>
            <person name="Glasner J."/>
            <person name="Perna N.T."/>
        </authorList>
    </citation>
    <scope>NUCLEOTIDE SEQUENCE [LARGE SCALE GENOMIC DNA]</scope>
    <source>
        <strain>PC1</strain>
    </source>
</reference>
<feature type="chain" id="PRO_1000213698" description="DnaA initiator-associating protein DiaA">
    <location>
        <begin position="1"/>
        <end position="196"/>
    </location>
</feature>
<feature type="domain" description="SIS" evidence="1">
    <location>
        <begin position="34"/>
        <end position="196"/>
    </location>
</feature>
<comment type="function">
    <text evidence="1">Required for the timely initiation of chromosomal replication via direct interactions with the DnaA initiator protein.</text>
</comment>
<comment type="subunit">
    <text evidence="1">Homotetramer; dimer of dimers.</text>
</comment>
<comment type="similarity">
    <text evidence="1">Belongs to the SIS family. DiaA subfamily.</text>
</comment>
<organism>
    <name type="scientific">Pectobacterium carotovorum subsp. carotovorum (strain PC1)</name>
    <dbReference type="NCBI Taxonomy" id="561230"/>
    <lineage>
        <taxon>Bacteria</taxon>
        <taxon>Pseudomonadati</taxon>
        <taxon>Pseudomonadota</taxon>
        <taxon>Gammaproteobacteria</taxon>
        <taxon>Enterobacterales</taxon>
        <taxon>Pectobacteriaceae</taxon>
        <taxon>Pectobacterium</taxon>
    </lineage>
</organism>
<sequence>MLDRIKVCFTESIQTQIAAAEALPDAISRGAIAMVQSLLNGNKILCCGNGTSAANAQHFAASMINRFEAERPSLPAIALNADNVVLTAIANDRLHEEVYAKQVRALGQAGDVLLAISTRGNSRDIVKAVESAVTRDMTIVALTGYDGGELAGLLGPQDVEIRIPSHRSARIQEMHMLTVNCLCDLIDNTLFPHQND</sequence>
<keyword id="KW-0235">DNA replication</keyword>
<gene>
    <name evidence="1" type="primary">diaA</name>
    <name type="ordered locus">PC1_0306</name>
</gene>
<name>DIAA_PECCP</name>
<protein>
    <recommendedName>
        <fullName evidence="1">DnaA initiator-associating protein DiaA</fullName>
    </recommendedName>
</protein>
<dbReference type="EMBL" id="CP001657">
    <property type="protein sequence ID" value="ACT11365.1"/>
    <property type="molecule type" value="Genomic_DNA"/>
</dbReference>
<dbReference type="RefSeq" id="WP_012773024.1">
    <property type="nucleotide sequence ID" value="NC_012917.1"/>
</dbReference>
<dbReference type="SMR" id="C6DIR5"/>
<dbReference type="STRING" id="561230.PC1_0306"/>
<dbReference type="GeneID" id="67795898"/>
<dbReference type="KEGG" id="pct:PC1_0306"/>
<dbReference type="eggNOG" id="COG0279">
    <property type="taxonomic scope" value="Bacteria"/>
</dbReference>
<dbReference type="HOGENOM" id="CLU_080999_3_1_6"/>
<dbReference type="OrthoDB" id="9810929at2"/>
<dbReference type="Proteomes" id="UP000002736">
    <property type="component" value="Chromosome"/>
</dbReference>
<dbReference type="GO" id="GO:0097367">
    <property type="term" value="F:carbohydrate derivative binding"/>
    <property type="evidence" value="ECO:0007669"/>
    <property type="project" value="InterPro"/>
</dbReference>
<dbReference type="GO" id="GO:1901135">
    <property type="term" value="P:carbohydrate derivative metabolic process"/>
    <property type="evidence" value="ECO:0007669"/>
    <property type="project" value="InterPro"/>
</dbReference>
<dbReference type="GO" id="GO:0006260">
    <property type="term" value="P:DNA replication"/>
    <property type="evidence" value="ECO:0007669"/>
    <property type="project" value="UniProtKB-UniRule"/>
</dbReference>
<dbReference type="CDD" id="cd05006">
    <property type="entry name" value="SIS_GmhA"/>
    <property type="match status" value="1"/>
</dbReference>
<dbReference type="FunFam" id="3.40.50.10490:FF:000006">
    <property type="entry name" value="DnaA initiator-associating protein DiaA"/>
    <property type="match status" value="1"/>
</dbReference>
<dbReference type="Gene3D" id="3.40.50.10490">
    <property type="entry name" value="Glucose-6-phosphate isomerase like protein, domain 1"/>
    <property type="match status" value="1"/>
</dbReference>
<dbReference type="HAMAP" id="MF_01157">
    <property type="entry name" value="SIS_DiaA"/>
    <property type="match status" value="1"/>
</dbReference>
<dbReference type="InterPro" id="IPR023070">
    <property type="entry name" value="DiaA"/>
</dbReference>
<dbReference type="InterPro" id="IPR035461">
    <property type="entry name" value="GmhA/DiaA"/>
</dbReference>
<dbReference type="InterPro" id="IPR001347">
    <property type="entry name" value="SIS_dom"/>
</dbReference>
<dbReference type="InterPro" id="IPR046348">
    <property type="entry name" value="SIS_dom_sf"/>
</dbReference>
<dbReference type="InterPro" id="IPR050099">
    <property type="entry name" value="SIS_GmhA/DiaA_subfam"/>
</dbReference>
<dbReference type="NCBIfam" id="NF008138">
    <property type="entry name" value="PRK10886.1"/>
    <property type="match status" value="1"/>
</dbReference>
<dbReference type="PANTHER" id="PTHR30390:SF6">
    <property type="entry name" value="DNAA INITIATOR-ASSOCIATING PROTEIN DIAA"/>
    <property type="match status" value="1"/>
</dbReference>
<dbReference type="PANTHER" id="PTHR30390">
    <property type="entry name" value="SEDOHEPTULOSE 7-PHOSPHATE ISOMERASE / DNAA INITIATOR-ASSOCIATING FACTOR FOR REPLICATION INITIATION"/>
    <property type="match status" value="1"/>
</dbReference>
<dbReference type="Pfam" id="PF13580">
    <property type="entry name" value="SIS_2"/>
    <property type="match status" value="1"/>
</dbReference>
<dbReference type="SUPFAM" id="SSF53697">
    <property type="entry name" value="SIS domain"/>
    <property type="match status" value="1"/>
</dbReference>
<dbReference type="PROSITE" id="PS51464">
    <property type="entry name" value="SIS"/>
    <property type="match status" value="1"/>
</dbReference>